<evidence type="ECO:0000255" key="1">
    <source>
        <dbReference type="HAMAP-Rule" id="MF_00195"/>
    </source>
</evidence>
<evidence type="ECO:0000256" key="2">
    <source>
        <dbReference type="SAM" id="MobiDB-lite"/>
    </source>
</evidence>
<evidence type="ECO:0007829" key="3">
    <source>
        <dbReference type="PDB" id="6XRS"/>
    </source>
</evidence>
<accession>B4RKD2</accession>
<protein>
    <recommendedName>
        <fullName evidence="1">GTPase Der</fullName>
    </recommendedName>
    <alternativeName>
        <fullName evidence="1">GTP-binding protein EngA</fullName>
    </alternativeName>
</protein>
<sequence>MKPTIALIGRPNVGKSTLFNRLTRTKDALVHDLPGLTRDRHYGHGKVGSKPYFVIDTGGFEPVVDSGILHEMAKQTLQAVDEADAVVFLVDGRTGLTPQDKIIADRLRQSPRPVYLAVNKGEGGDRAVLAAEFYELALGEPHVISGAHGDGVYYLIEEILENFPEPEAEEADAKHPVFAVIGRPNVGKSTLVNAILGEKRVIAFDMAGTTRDSIHIDFEREGKPFTIIDTAGVRRRGKVDEAVEKFSVIKAMQAVEAANVAVLVLDAQQDIADQDATIAGFALEAGRALVVAVNKWDGISEERREQVKRDISRKLYFLDFAKFHFISALKERGIDGLFESIQAAYNAAMIKMPTPKITRVLQTAVGRQQPPRAGLVRPKMRYAHQGGMNPPVIVVHGNSLHAISDSYTRYLTQTFRKAFNLQGTPLRIQYNVSENPYENAEDKPKKKPLRRVSLSNRIEKREGRKEEKNRFKKKTKVSVKKQFSK</sequence>
<organism>
    <name type="scientific">Neisseria gonorrhoeae (strain NCCP11945)</name>
    <dbReference type="NCBI Taxonomy" id="521006"/>
    <lineage>
        <taxon>Bacteria</taxon>
        <taxon>Pseudomonadati</taxon>
        <taxon>Pseudomonadota</taxon>
        <taxon>Betaproteobacteria</taxon>
        <taxon>Neisseriales</taxon>
        <taxon>Neisseriaceae</taxon>
        <taxon>Neisseria</taxon>
    </lineage>
</organism>
<feature type="chain" id="PRO_1000099142" description="GTPase Der">
    <location>
        <begin position="1"/>
        <end position="485"/>
    </location>
</feature>
<feature type="domain" description="EngA-type G 1">
    <location>
        <begin position="3"/>
        <end position="167"/>
    </location>
</feature>
<feature type="domain" description="EngA-type G 2">
    <location>
        <begin position="176"/>
        <end position="349"/>
    </location>
</feature>
<feature type="domain" description="KH-like" evidence="1">
    <location>
        <begin position="350"/>
        <end position="434"/>
    </location>
</feature>
<feature type="region of interest" description="Disordered" evidence="2">
    <location>
        <begin position="435"/>
        <end position="485"/>
    </location>
</feature>
<feature type="compositionally biased region" description="Basic and acidic residues" evidence="2">
    <location>
        <begin position="457"/>
        <end position="469"/>
    </location>
</feature>
<feature type="compositionally biased region" description="Basic residues" evidence="2">
    <location>
        <begin position="470"/>
        <end position="485"/>
    </location>
</feature>
<feature type="binding site" evidence="1">
    <location>
        <begin position="9"/>
        <end position="16"/>
    </location>
    <ligand>
        <name>GTP</name>
        <dbReference type="ChEBI" id="CHEBI:37565"/>
        <label>1</label>
    </ligand>
</feature>
<feature type="binding site" evidence="1">
    <location>
        <begin position="56"/>
        <end position="60"/>
    </location>
    <ligand>
        <name>GTP</name>
        <dbReference type="ChEBI" id="CHEBI:37565"/>
        <label>1</label>
    </ligand>
</feature>
<feature type="binding site" evidence="1">
    <location>
        <begin position="119"/>
        <end position="122"/>
    </location>
    <ligand>
        <name>GTP</name>
        <dbReference type="ChEBI" id="CHEBI:37565"/>
        <label>1</label>
    </ligand>
</feature>
<feature type="binding site" evidence="1">
    <location>
        <begin position="182"/>
        <end position="189"/>
    </location>
    <ligand>
        <name>GTP</name>
        <dbReference type="ChEBI" id="CHEBI:37565"/>
        <label>2</label>
    </ligand>
</feature>
<feature type="binding site" evidence="1">
    <location>
        <begin position="229"/>
        <end position="233"/>
    </location>
    <ligand>
        <name>GTP</name>
        <dbReference type="ChEBI" id="CHEBI:37565"/>
        <label>2</label>
    </ligand>
</feature>
<feature type="binding site" evidence="1">
    <location>
        <begin position="294"/>
        <end position="297"/>
    </location>
    <ligand>
        <name>GTP</name>
        <dbReference type="ChEBI" id="CHEBI:37565"/>
        <label>2</label>
    </ligand>
</feature>
<feature type="strand" evidence="3">
    <location>
        <begin position="4"/>
        <end position="8"/>
    </location>
</feature>
<feature type="helix" evidence="3">
    <location>
        <begin position="15"/>
        <end position="22"/>
    </location>
</feature>
<feature type="strand" evidence="3">
    <location>
        <begin position="36"/>
        <end position="38"/>
    </location>
</feature>
<feature type="strand" evidence="3">
    <location>
        <begin position="41"/>
        <end position="44"/>
    </location>
</feature>
<feature type="strand" evidence="3">
    <location>
        <begin position="47"/>
        <end position="50"/>
    </location>
</feature>
<feature type="strand" evidence="3">
    <location>
        <begin position="53"/>
        <end position="56"/>
    </location>
</feature>
<feature type="helix" evidence="3">
    <location>
        <begin position="57"/>
        <end position="60"/>
    </location>
</feature>
<feature type="helix" evidence="3">
    <location>
        <begin position="74"/>
        <end position="82"/>
    </location>
</feature>
<feature type="strand" evidence="3">
    <location>
        <begin position="83"/>
        <end position="91"/>
    </location>
</feature>
<feature type="turn" evidence="3">
    <location>
        <begin position="92"/>
        <end position="94"/>
    </location>
</feature>
<feature type="helix" evidence="3">
    <location>
        <begin position="98"/>
        <end position="108"/>
    </location>
</feature>
<feature type="strand" evidence="3">
    <location>
        <begin position="114"/>
        <end position="119"/>
    </location>
</feature>
<feature type="helix" evidence="3">
    <location>
        <begin position="128"/>
        <end position="131"/>
    </location>
</feature>
<feature type="helix" evidence="3">
    <location>
        <begin position="132"/>
        <end position="136"/>
    </location>
</feature>
<feature type="strand" evidence="3">
    <location>
        <begin position="141"/>
        <end position="143"/>
    </location>
</feature>
<feature type="turn" evidence="3">
    <location>
        <begin position="146"/>
        <end position="148"/>
    </location>
</feature>
<feature type="helix" evidence="3">
    <location>
        <begin position="152"/>
        <end position="160"/>
    </location>
</feature>
<feature type="strand" evidence="3">
    <location>
        <begin position="177"/>
        <end position="181"/>
    </location>
</feature>
<feature type="helix" evidence="3">
    <location>
        <begin position="188"/>
        <end position="196"/>
    </location>
</feature>
<feature type="strand" evidence="3">
    <location>
        <begin position="215"/>
        <end position="220"/>
    </location>
</feature>
<feature type="strand" evidence="3">
    <location>
        <begin position="223"/>
        <end position="228"/>
    </location>
</feature>
<feature type="helix" evidence="3">
    <location>
        <begin position="248"/>
        <end position="257"/>
    </location>
</feature>
<feature type="strand" evidence="3">
    <location>
        <begin position="259"/>
        <end position="266"/>
    </location>
</feature>
<feature type="helix" evidence="3">
    <location>
        <begin position="273"/>
        <end position="284"/>
    </location>
</feature>
<feature type="strand" evidence="3">
    <location>
        <begin position="288"/>
        <end position="294"/>
    </location>
</feature>
<feature type="helix" evidence="3">
    <location>
        <begin position="296"/>
        <end position="298"/>
    </location>
</feature>
<feature type="helix" evidence="3">
    <location>
        <begin position="301"/>
        <end position="314"/>
    </location>
</feature>
<feature type="helix" evidence="3">
    <location>
        <begin position="316"/>
        <end position="318"/>
    </location>
</feature>
<feature type="strand" evidence="3">
    <location>
        <begin position="323"/>
        <end position="325"/>
    </location>
</feature>
<feature type="turn" evidence="3">
    <location>
        <begin position="328"/>
        <end position="331"/>
    </location>
</feature>
<feature type="helix" evidence="3">
    <location>
        <begin position="337"/>
        <end position="348"/>
    </location>
</feature>
<feature type="helix" evidence="3">
    <location>
        <begin position="354"/>
        <end position="367"/>
    </location>
</feature>
<feature type="strand" evidence="3">
    <location>
        <begin position="379"/>
        <end position="387"/>
    </location>
</feature>
<feature type="turn" evidence="3">
    <location>
        <begin position="388"/>
        <end position="391"/>
    </location>
</feature>
<feature type="strand" evidence="3">
    <location>
        <begin position="392"/>
        <end position="399"/>
    </location>
</feature>
<feature type="helix" evidence="3">
    <location>
        <begin position="405"/>
        <end position="419"/>
    </location>
</feature>
<feature type="strand" evidence="3">
    <location>
        <begin position="427"/>
        <end position="431"/>
    </location>
</feature>
<gene>
    <name evidence="1" type="primary">der</name>
    <name type="synonym">engA</name>
    <name type="ordered locus">NGK_0592</name>
</gene>
<comment type="function">
    <text evidence="1">GTPase that plays an essential role in the late steps of ribosome biogenesis.</text>
</comment>
<comment type="subunit">
    <text evidence="1">Associates with the 50S ribosomal subunit.</text>
</comment>
<comment type="similarity">
    <text evidence="1">Belongs to the TRAFAC class TrmE-Era-EngA-EngB-Septin-like GTPase superfamily. EngA (Der) GTPase family.</text>
</comment>
<proteinExistence type="evidence at protein level"/>
<dbReference type="EMBL" id="CP001050">
    <property type="protein sequence ID" value="ACF29283.1"/>
    <property type="molecule type" value="Genomic_DNA"/>
</dbReference>
<dbReference type="RefSeq" id="WP_010357432.1">
    <property type="nucleotide sequence ID" value="NC_011035.1"/>
</dbReference>
<dbReference type="PDB" id="6XRS">
    <property type="method" value="X-ray"/>
    <property type="resolution" value="2.80 A"/>
    <property type="chains" value="A/B/C/D=1-442"/>
</dbReference>
<dbReference type="PDBsum" id="6XRS"/>
<dbReference type="SMR" id="B4RKD2"/>
<dbReference type="GeneID" id="66752763"/>
<dbReference type="KEGG" id="ngk:NGK_0592"/>
<dbReference type="HOGENOM" id="CLU_016077_6_2_4"/>
<dbReference type="Proteomes" id="UP000002564">
    <property type="component" value="Chromosome"/>
</dbReference>
<dbReference type="GO" id="GO:0016887">
    <property type="term" value="F:ATP hydrolysis activity"/>
    <property type="evidence" value="ECO:0007669"/>
    <property type="project" value="InterPro"/>
</dbReference>
<dbReference type="GO" id="GO:0005525">
    <property type="term" value="F:GTP binding"/>
    <property type="evidence" value="ECO:0007669"/>
    <property type="project" value="UniProtKB-UniRule"/>
</dbReference>
<dbReference type="GO" id="GO:0043022">
    <property type="term" value="F:ribosome binding"/>
    <property type="evidence" value="ECO:0007669"/>
    <property type="project" value="TreeGrafter"/>
</dbReference>
<dbReference type="GO" id="GO:0042254">
    <property type="term" value="P:ribosome biogenesis"/>
    <property type="evidence" value="ECO:0007669"/>
    <property type="project" value="UniProtKB-KW"/>
</dbReference>
<dbReference type="CDD" id="cd01894">
    <property type="entry name" value="EngA1"/>
    <property type="match status" value="1"/>
</dbReference>
<dbReference type="CDD" id="cd01895">
    <property type="entry name" value="EngA2"/>
    <property type="match status" value="1"/>
</dbReference>
<dbReference type="FunFam" id="3.40.50.300:FF:000040">
    <property type="entry name" value="GTPase Der"/>
    <property type="match status" value="1"/>
</dbReference>
<dbReference type="FunFam" id="3.40.50.300:FF:000057">
    <property type="entry name" value="GTPase Der"/>
    <property type="match status" value="1"/>
</dbReference>
<dbReference type="Gene3D" id="3.30.300.20">
    <property type="match status" value="1"/>
</dbReference>
<dbReference type="Gene3D" id="3.40.50.300">
    <property type="entry name" value="P-loop containing nucleotide triphosphate hydrolases"/>
    <property type="match status" value="2"/>
</dbReference>
<dbReference type="HAMAP" id="MF_00195">
    <property type="entry name" value="GTPase_Der"/>
    <property type="match status" value="1"/>
</dbReference>
<dbReference type="InterPro" id="IPR003593">
    <property type="entry name" value="AAA+_ATPase"/>
</dbReference>
<dbReference type="InterPro" id="IPR031166">
    <property type="entry name" value="G_ENGA"/>
</dbReference>
<dbReference type="InterPro" id="IPR006073">
    <property type="entry name" value="GTP-bd"/>
</dbReference>
<dbReference type="InterPro" id="IPR016484">
    <property type="entry name" value="GTPase_Der"/>
</dbReference>
<dbReference type="InterPro" id="IPR032859">
    <property type="entry name" value="KH_dom-like"/>
</dbReference>
<dbReference type="InterPro" id="IPR015946">
    <property type="entry name" value="KH_dom-like_a/b"/>
</dbReference>
<dbReference type="InterPro" id="IPR027417">
    <property type="entry name" value="P-loop_NTPase"/>
</dbReference>
<dbReference type="InterPro" id="IPR005225">
    <property type="entry name" value="Small_GTP-bd"/>
</dbReference>
<dbReference type="NCBIfam" id="TIGR03594">
    <property type="entry name" value="GTPase_EngA"/>
    <property type="match status" value="1"/>
</dbReference>
<dbReference type="NCBIfam" id="TIGR00231">
    <property type="entry name" value="small_GTP"/>
    <property type="match status" value="2"/>
</dbReference>
<dbReference type="PANTHER" id="PTHR43834">
    <property type="entry name" value="GTPASE DER"/>
    <property type="match status" value="1"/>
</dbReference>
<dbReference type="PANTHER" id="PTHR43834:SF6">
    <property type="entry name" value="GTPASE DER"/>
    <property type="match status" value="1"/>
</dbReference>
<dbReference type="Pfam" id="PF14714">
    <property type="entry name" value="KH_dom-like"/>
    <property type="match status" value="1"/>
</dbReference>
<dbReference type="Pfam" id="PF01926">
    <property type="entry name" value="MMR_HSR1"/>
    <property type="match status" value="2"/>
</dbReference>
<dbReference type="PIRSF" id="PIRSF006485">
    <property type="entry name" value="GTP-binding_EngA"/>
    <property type="match status" value="1"/>
</dbReference>
<dbReference type="PRINTS" id="PR00326">
    <property type="entry name" value="GTP1OBG"/>
</dbReference>
<dbReference type="SMART" id="SM00382">
    <property type="entry name" value="AAA"/>
    <property type="match status" value="2"/>
</dbReference>
<dbReference type="SUPFAM" id="SSF52540">
    <property type="entry name" value="P-loop containing nucleoside triphosphate hydrolases"/>
    <property type="match status" value="2"/>
</dbReference>
<dbReference type="PROSITE" id="PS51712">
    <property type="entry name" value="G_ENGA"/>
    <property type="match status" value="2"/>
</dbReference>
<name>DER_NEIG2</name>
<keyword id="KW-0002">3D-structure</keyword>
<keyword id="KW-0342">GTP-binding</keyword>
<keyword id="KW-0547">Nucleotide-binding</keyword>
<keyword id="KW-0677">Repeat</keyword>
<keyword id="KW-0690">Ribosome biogenesis</keyword>
<reference key="1">
    <citation type="journal article" date="2008" name="J. Bacteriol.">
        <title>Complete genome sequence of Neisseria gonorrhoeae NCCP11945.</title>
        <authorList>
            <person name="Chung G.T."/>
            <person name="Yoo J.S."/>
            <person name="Oh H.B."/>
            <person name="Lee Y.S."/>
            <person name="Cha S.H."/>
            <person name="Kim S.J."/>
            <person name="Yoo C.K."/>
        </authorList>
    </citation>
    <scope>NUCLEOTIDE SEQUENCE [LARGE SCALE GENOMIC DNA]</scope>
    <source>
        <strain>NCCP11945</strain>
    </source>
</reference>